<comment type="function">
    <text evidence="1">Specifically methylates the N7 position of guanine in position 535 of 16S rRNA.</text>
</comment>
<comment type="subcellular location">
    <subcellularLocation>
        <location evidence="1">Cytoplasm</location>
    </subcellularLocation>
</comment>
<comment type="similarity">
    <text evidence="1">Belongs to the methyltransferase superfamily. RNA methyltransferase RsmG family.</text>
</comment>
<reference key="1">
    <citation type="journal article" date="2011" name="J. Bacteriol.">
        <title>Complete genome sequence of the Thermophilic Bacterium Exiguobacterium sp. AT1b.</title>
        <authorList>
            <person name="Vishnivetskaya T.A."/>
            <person name="Lucas S."/>
            <person name="Copeland A."/>
            <person name="Lapidus A."/>
            <person name="Glavina del Rio T."/>
            <person name="Dalin E."/>
            <person name="Tice H."/>
            <person name="Bruce D.C."/>
            <person name="Goodwin L.A."/>
            <person name="Pitluck S."/>
            <person name="Saunders E."/>
            <person name="Brettin T."/>
            <person name="Detter C."/>
            <person name="Han C."/>
            <person name="Larimer F."/>
            <person name="Land M.L."/>
            <person name="Hauser L.J."/>
            <person name="Kyrpides N.C."/>
            <person name="Ovchinnikova G."/>
            <person name="Kathariou S."/>
            <person name="Ramaley R.F."/>
            <person name="Rodrigues D.F."/>
            <person name="Hendrix C."/>
            <person name="Richardson P."/>
            <person name="Tiedje J.M."/>
        </authorList>
    </citation>
    <scope>NUCLEOTIDE SEQUENCE [LARGE SCALE GENOMIC DNA]</scope>
    <source>
        <strain>ATCC BAA-1283 / AT1b</strain>
    </source>
</reference>
<evidence type="ECO:0000255" key="1">
    <source>
        <dbReference type="HAMAP-Rule" id="MF_00074"/>
    </source>
</evidence>
<feature type="chain" id="PRO_1000202500" description="Ribosomal RNA small subunit methyltransferase G">
    <location>
        <begin position="1"/>
        <end position="238"/>
    </location>
</feature>
<feature type="binding site" evidence="1">
    <location>
        <position position="77"/>
    </location>
    <ligand>
        <name>S-adenosyl-L-methionine</name>
        <dbReference type="ChEBI" id="CHEBI:59789"/>
    </ligand>
</feature>
<feature type="binding site" evidence="1">
    <location>
        <position position="82"/>
    </location>
    <ligand>
        <name>S-adenosyl-L-methionine</name>
        <dbReference type="ChEBI" id="CHEBI:59789"/>
    </ligand>
</feature>
<feature type="binding site" evidence="1">
    <location>
        <begin position="128"/>
        <end position="129"/>
    </location>
    <ligand>
        <name>S-adenosyl-L-methionine</name>
        <dbReference type="ChEBI" id="CHEBI:59789"/>
    </ligand>
</feature>
<feature type="binding site" evidence="1">
    <location>
        <position position="147"/>
    </location>
    <ligand>
        <name>S-adenosyl-L-methionine</name>
        <dbReference type="ChEBI" id="CHEBI:59789"/>
    </ligand>
</feature>
<proteinExistence type="inferred from homology"/>
<protein>
    <recommendedName>
        <fullName evidence="1">Ribosomal RNA small subunit methyltransferase G</fullName>
        <ecNumber evidence="1">2.1.1.-</ecNumber>
    </recommendedName>
    <alternativeName>
        <fullName evidence="1">16S rRNA 7-methylguanosine methyltransferase</fullName>
        <shortName evidence="1">16S rRNA m7G methyltransferase</shortName>
    </alternativeName>
</protein>
<accession>C4L001</accession>
<organism>
    <name type="scientific">Exiguobacterium sp. (strain ATCC BAA-1283 / AT1b)</name>
    <dbReference type="NCBI Taxonomy" id="360911"/>
    <lineage>
        <taxon>Bacteria</taxon>
        <taxon>Bacillati</taxon>
        <taxon>Bacillota</taxon>
        <taxon>Bacilli</taxon>
        <taxon>Bacillales</taxon>
        <taxon>Bacillales Family XII. Incertae Sedis</taxon>
        <taxon>Exiguobacterium</taxon>
    </lineage>
</organism>
<keyword id="KW-0963">Cytoplasm</keyword>
<keyword id="KW-0489">Methyltransferase</keyword>
<keyword id="KW-0698">rRNA processing</keyword>
<keyword id="KW-0949">S-adenosyl-L-methionine</keyword>
<keyword id="KW-0808">Transferase</keyword>
<gene>
    <name evidence="1" type="primary">rsmG</name>
    <name type="ordered locus">EAT1b_1738</name>
</gene>
<dbReference type="EC" id="2.1.1.-" evidence="1"/>
<dbReference type="EMBL" id="CP001615">
    <property type="protein sequence ID" value="ACQ70664.1"/>
    <property type="molecule type" value="Genomic_DNA"/>
</dbReference>
<dbReference type="RefSeq" id="WP_015880223.1">
    <property type="nucleotide sequence ID" value="NC_012673.1"/>
</dbReference>
<dbReference type="SMR" id="C4L001"/>
<dbReference type="STRING" id="360911.EAT1b_1738"/>
<dbReference type="GeneID" id="94373605"/>
<dbReference type="KEGG" id="eat:EAT1b_1738"/>
<dbReference type="eggNOG" id="COG0357">
    <property type="taxonomic scope" value="Bacteria"/>
</dbReference>
<dbReference type="HOGENOM" id="CLU_065341_0_0_9"/>
<dbReference type="OrthoDB" id="9808773at2"/>
<dbReference type="Proteomes" id="UP000000716">
    <property type="component" value="Chromosome"/>
</dbReference>
<dbReference type="GO" id="GO:0005829">
    <property type="term" value="C:cytosol"/>
    <property type="evidence" value="ECO:0007669"/>
    <property type="project" value="TreeGrafter"/>
</dbReference>
<dbReference type="GO" id="GO:0070043">
    <property type="term" value="F:rRNA (guanine-N7-)-methyltransferase activity"/>
    <property type="evidence" value="ECO:0007669"/>
    <property type="project" value="UniProtKB-UniRule"/>
</dbReference>
<dbReference type="CDD" id="cd02440">
    <property type="entry name" value="AdoMet_MTases"/>
    <property type="match status" value="1"/>
</dbReference>
<dbReference type="FunFam" id="3.40.50.150:FF:000041">
    <property type="entry name" value="Ribosomal RNA small subunit methyltransferase G"/>
    <property type="match status" value="1"/>
</dbReference>
<dbReference type="Gene3D" id="3.40.50.150">
    <property type="entry name" value="Vaccinia Virus protein VP39"/>
    <property type="match status" value="1"/>
</dbReference>
<dbReference type="HAMAP" id="MF_00074">
    <property type="entry name" value="16SrRNA_methyltr_G"/>
    <property type="match status" value="1"/>
</dbReference>
<dbReference type="InterPro" id="IPR003682">
    <property type="entry name" value="rRNA_ssu_MeTfrase_G"/>
</dbReference>
<dbReference type="InterPro" id="IPR029063">
    <property type="entry name" value="SAM-dependent_MTases_sf"/>
</dbReference>
<dbReference type="NCBIfam" id="TIGR00138">
    <property type="entry name" value="rsmG_gidB"/>
    <property type="match status" value="1"/>
</dbReference>
<dbReference type="PANTHER" id="PTHR31760">
    <property type="entry name" value="S-ADENOSYL-L-METHIONINE-DEPENDENT METHYLTRANSFERASES SUPERFAMILY PROTEIN"/>
    <property type="match status" value="1"/>
</dbReference>
<dbReference type="PANTHER" id="PTHR31760:SF0">
    <property type="entry name" value="S-ADENOSYL-L-METHIONINE-DEPENDENT METHYLTRANSFERASES SUPERFAMILY PROTEIN"/>
    <property type="match status" value="1"/>
</dbReference>
<dbReference type="Pfam" id="PF02527">
    <property type="entry name" value="GidB"/>
    <property type="match status" value="1"/>
</dbReference>
<dbReference type="PIRSF" id="PIRSF003078">
    <property type="entry name" value="GidB"/>
    <property type="match status" value="1"/>
</dbReference>
<dbReference type="SUPFAM" id="SSF53335">
    <property type="entry name" value="S-adenosyl-L-methionine-dependent methyltransferases"/>
    <property type="match status" value="1"/>
</dbReference>
<sequence>MNESQFIEALRAEGFELSETQLSQFKRYFEMLVEWNEKMNLTAITDREEVYLKHFYDSLSAAFHFDFTKVETVCDVGAGAGFPSLPLKILFPHLHVTIIDSLNKRITFLNELALALGLEGVAFHHGRAEEFGKNKKFREQFDVVTARAVARMTVLAEYCLPLAKVGGSFVALKAAKVSDEMADAKNALAVLGGKEKATHQFLLPGEMSERNIVVVDKLRKTPGKYPRKAGTPAKEPLI</sequence>
<name>RSMG_EXISA</name>